<proteinExistence type="evidence at transcript level"/>
<keyword id="KW-1003">Cell membrane</keyword>
<keyword id="KW-0342">GTP-binding</keyword>
<keyword id="KW-0449">Lipoprotein</keyword>
<keyword id="KW-0472">Membrane</keyword>
<keyword id="KW-0488">Methylation</keyword>
<keyword id="KW-0547">Nucleotide-binding</keyword>
<keyword id="KW-0636">Prenylation</keyword>
<organism>
    <name type="scientific">Diplobatis ommata</name>
    <name type="common">Ocellated electric ray</name>
    <name type="synonym">Discopyge ommata</name>
    <dbReference type="NCBI Taxonomy" id="1870830"/>
    <lineage>
        <taxon>Eukaryota</taxon>
        <taxon>Metazoa</taxon>
        <taxon>Chordata</taxon>
        <taxon>Craniata</taxon>
        <taxon>Vertebrata</taxon>
        <taxon>Chondrichthyes</taxon>
        <taxon>Elasmobranchii</taxon>
        <taxon>Batoidea</taxon>
        <taxon>Torpediniformes</taxon>
        <taxon>Narcinidae</taxon>
        <taxon>Diplobatis</taxon>
    </lineage>
</organism>
<evidence type="ECO:0000250" key="1"/>
<evidence type="ECO:0000255" key="2"/>
<evidence type="ECO:0000305" key="3"/>
<protein>
    <recommendedName>
        <fullName>Ras-like GTP-binding protein O-RHO</fullName>
    </recommendedName>
</protein>
<accession>P22122</accession>
<name>RHO_DIPOM</name>
<dbReference type="EMBL" id="M38396">
    <property type="protein sequence ID" value="AAA49225.1"/>
    <property type="molecule type" value="mRNA"/>
</dbReference>
<dbReference type="PIR" id="G38625">
    <property type="entry name" value="G38625"/>
</dbReference>
<dbReference type="SMR" id="P22122"/>
<dbReference type="GO" id="GO:0005886">
    <property type="term" value="C:plasma membrane"/>
    <property type="evidence" value="ECO:0007669"/>
    <property type="project" value="UniProtKB-SubCell"/>
</dbReference>
<dbReference type="GO" id="GO:0005525">
    <property type="term" value="F:GTP binding"/>
    <property type="evidence" value="ECO:0007669"/>
    <property type="project" value="UniProtKB-KW"/>
</dbReference>
<dbReference type="GO" id="GO:0003924">
    <property type="term" value="F:GTPase activity"/>
    <property type="evidence" value="ECO:0007669"/>
    <property type="project" value="InterPro"/>
</dbReference>
<dbReference type="GO" id="GO:0007264">
    <property type="term" value="P:small GTPase-mediated signal transduction"/>
    <property type="evidence" value="ECO:0007669"/>
    <property type="project" value="InterPro"/>
</dbReference>
<dbReference type="CDD" id="cd01870">
    <property type="entry name" value="RhoA_like"/>
    <property type="match status" value="1"/>
</dbReference>
<dbReference type="FunFam" id="3.40.50.300:FF:000095">
    <property type="entry name" value="Rho-related GTP-binding protein RhoC"/>
    <property type="match status" value="1"/>
</dbReference>
<dbReference type="Gene3D" id="3.40.50.300">
    <property type="entry name" value="P-loop containing nucleotide triphosphate hydrolases"/>
    <property type="match status" value="1"/>
</dbReference>
<dbReference type="InterPro" id="IPR027417">
    <property type="entry name" value="P-loop_NTPase"/>
</dbReference>
<dbReference type="InterPro" id="IPR005225">
    <property type="entry name" value="Small_GTP-bd"/>
</dbReference>
<dbReference type="InterPro" id="IPR001806">
    <property type="entry name" value="Small_GTPase"/>
</dbReference>
<dbReference type="InterPro" id="IPR003578">
    <property type="entry name" value="Small_GTPase_Rho"/>
</dbReference>
<dbReference type="NCBIfam" id="TIGR00231">
    <property type="entry name" value="small_GTP"/>
    <property type="match status" value="1"/>
</dbReference>
<dbReference type="PANTHER" id="PTHR24072">
    <property type="entry name" value="RHO FAMILY GTPASE"/>
    <property type="match status" value="1"/>
</dbReference>
<dbReference type="Pfam" id="PF00071">
    <property type="entry name" value="Ras"/>
    <property type="match status" value="1"/>
</dbReference>
<dbReference type="PRINTS" id="PR00449">
    <property type="entry name" value="RASTRNSFRMNG"/>
</dbReference>
<dbReference type="SMART" id="SM00175">
    <property type="entry name" value="RAB"/>
    <property type="match status" value="1"/>
</dbReference>
<dbReference type="SMART" id="SM00173">
    <property type="entry name" value="RAS"/>
    <property type="match status" value="1"/>
</dbReference>
<dbReference type="SMART" id="SM00174">
    <property type="entry name" value="RHO"/>
    <property type="match status" value="1"/>
</dbReference>
<dbReference type="SUPFAM" id="SSF52540">
    <property type="entry name" value="P-loop containing nucleoside triphosphate hydrolases"/>
    <property type="match status" value="1"/>
</dbReference>
<dbReference type="PROSITE" id="PS51420">
    <property type="entry name" value="RHO"/>
    <property type="match status" value="1"/>
</dbReference>
<comment type="subcellular location">
    <subcellularLocation>
        <location evidence="3">Cell membrane</location>
        <topology evidence="3">Lipid-anchor</topology>
        <orientation evidence="3">Cytoplasmic side</orientation>
    </subcellularLocation>
</comment>
<comment type="similarity">
    <text evidence="3">Belongs to the small GTPase superfamily. Rho family.</text>
</comment>
<feature type="chain" id="PRO_0000198883" description="Ras-like GTP-binding protein O-RHO">
    <location>
        <begin position="1"/>
        <end position="189"/>
    </location>
</feature>
<feature type="propeptide" id="PRO_0000281236" description="Removed in mature form" evidence="1">
    <location>
        <begin position="190"/>
        <end position="192"/>
    </location>
</feature>
<feature type="short sequence motif" description="Effector region" evidence="2">
    <location>
        <begin position="34"/>
        <end position="42"/>
    </location>
</feature>
<feature type="binding site" evidence="1">
    <location>
        <begin position="12"/>
        <end position="19"/>
    </location>
    <ligand>
        <name>GTP</name>
        <dbReference type="ChEBI" id="CHEBI:37565"/>
    </ligand>
</feature>
<feature type="binding site" evidence="1">
    <location>
        <begin position="59"/>
        <end position="63"/>
    </location>
    <ligand>
        <name>GTP</name>
        <dbReference type="ChEBI" id="CHEBI:37565"/>
    </ligand>
</feature>
<feature type="binding site" evidence="1">
    <location>
        <begin position="117"/>
        <end position="120"/>
    </location>
    <ligand>
        <name>GTP</name>
        <dbReference type="ChEBI" id="CHEBI:37565"/>
    </ligand>
</feature>
<feature type="modified residue" description="Cysteine methyl ester" evidence="1">
    <location>
        <position position="189"/>
    </location>
</feature>
<feature type="lipid moiety-binding region" description="S-geranylgeranyl cysteine" evidence="1">
    <location>
        <position position="189"/>
    </location>
</feature>
<reference key="1">
    <citation type="journal article" date="1991" name="J. Biol. Chem.">
        <title>A family of ras-like GTP-binding proteins expressed in electromotor neurons.</title>
        <authorList>
            <person name="Ngsee J.K."/>
            <person name="Elferink L.A."/>
            <person name="Scheller R.H."/>
        </authorList>
    </citation>
    <scope>NUCLEOTIDE SEQUENCE [MRNA]</scope>
    <source>
        <tissue>Electric lobe</tissue>
    </source>
</reference>
<sequence>MAAIRKKLVIVGDGACGKTCLLIVFSKDQFPEVYVPTVFENYVADIEVDGKQVELALWDTAGQEDYDRLRPLSYPDTDVILMCFSIDSPDSLENIPEKWTPEVKHFCPNIPIILVGNKKTAGDEHTRRELAKMKQEPVKPDDAKEMGSRIKAFGYLECSAKTKEGVREVFELASRAALQAKKTKSKSPCLLL</sequence>